<gene>
    <name evidence="1" type="primary">nuoH</name>
    <name type="ordered locus">BT_4064</name>
</gene>
<comment type="function">
    <text evidence="1">NDH-1 shuttles electrons from NADH, via FMN and iron-sulfur (Fe-S) centers, to quinones in the respiratory chain. The immediate electron acceptor for the enzyme in this species is believed to be ubiquinone. Couples the redox reaction to proton translocation (for every two electrons transferred, four hydrogen ions are translocated across the cytoplasmic membrane), and thus conserves the redox energy in a proton gradient. This subunit may bind ubiquinone.</text>
</comment>
<comment type="catalytic activity">
    <reaction evidence="1">
        <text>a quinone + NADH + 5 H(+)(in) = a quinol + NAD(+) + 4 H(+)(out)</text>
        <dbReference type="Rhea" id="RHEA:57888"/>
        <dbReference type="ChEBI" id="CHEBI:15378"/>
        <dbReference type="ChEBI" id="CHEBI:24646"/>
        <dbReference type="ChEBI" id="CHEBI:57540"/>
        <dbReference type="ChEBI" id="CHEBI:57945"/>
        <dbReference type="ChEBI" id="CHEBI:132124"/>
    </reaction>
</comment>
<comment type="subunit">
    <text evidence="1">NDH-1 is composed of 14 different subunits. Subunits NuoA, H, J, K, L, M, N constitute the membrane sector of the complex.</text>
</comment>
<comment type="subcellular location">
    <subcellularLocation>
        <location evidence="1">Cell inner membrane</location>
        <topology evidence="1">Multi-pass membrane protein</topology>
    </subcellularLocation>
</comment>
<comment type="similarity">
    <text evidence="1">Belongs to the complex I subunit 1 family.</text>
</comment>
<organism>
    <name type="scientific">Bacteroides thetaiotaomicron (strain ATCC 29148 / DSM 2079 / JCM 5827 / CCUG 10774 / NCTC 10582 / VPI-5482 / E50)</name>
    <dbReference type="NCBI Taxonomy" id="226186"/>
    <lineage>
        <taxon>Bacteria</taxon>
        <taxon>Pseudomonadati</taxon>
        <taxon>Bacteroidota</taxon>
        <taxon>Bacteroidia</taxon>
        <taxon>Bacteroidales</taxon>
        <taxon>Bacteroidaceae</taxon>
        <taxon>Bacteroides</taxon>
    </lineage>
</organism>
<dbReference type="EC" id="7.1.1.-" evidence="1"/>
<dbReference type="EMBL" id="AE015928">
    <property type="protein sequence ID" value="AAO79169.1"/>
    <property type="molecule type" value="Genomic_DNA"/>
</dbReference>
<dbReference type="RefSeq" id="NP_812975.1">
    <property type="nucleotide sequence ID" value="NC_004663.1"/>
</dbReference>
<dbReference type="RefSeq" id="WP_011109091.1">
    <property type="nucleotide sequence ID" value="NC_004663.1"/>
</dbReference>
<dbReference type="SMR" id="Q8A0F7"/>
<dbReference type="FunCoup" id="Q8A0F7">
    <property type="interactions" value="161"/>
</dbReference>
<dbReference type="STRING" id="226186.BT_4064"/>
<dbReference type="PaxDb" id="226186-BT_4064"/>
<dbReference type="EnsemblBacteria" id="AAO79169">
    <property type="protein sequence ID" value="AAO79169"/>
    <property type="gene ID" value="BT_4064"/>
</dbReference>
<dbReference type="GeneID" id="60925239"/>
<dbReference type="KEGG" id="bth:BT_4064"/>
<dbReference type="PATRIC" id="fig|226186.12.peg.4129"/>
<dbReference type="eggNOG" id="COG1005">
    <property type="taxonomic scope" value="Bacteria"/>
</dbReference>
<dbReference type="HOGENOM" id="CLU_015134_0_1_10"/>
<dbReference type="InParanoid" id="Q8A0F7"/>
<dbReference type="OrthoDB" id="9803734at2"/>
<dbReference type="Proteomes" id="UP000001414">
    <property type="component" value="Chromosome"/>
</dbReference>
<dbReference type="GO" id="GO:0005886">
    <property type="term" value="C:plasma membrane"/>
    <property type="evidence" value="ECO:0007669"/>
    <property type="project" value="UniProtKB-SubCell"/>
</dbReference>
<dbReference type="GO" id="GO:0016655">
    <property type="term" value="F:oxidoreductase activity, acting on NAD(P)H, quinone or similar compound as acceptor"/>
    <property type="evidence" value="ECO:0007669"/>
    <property type="project" value="UniProtKB-UniRule"/>
</dbReference>
<dbReference type="GO" id="GO:0048038">
    <property type="term" value="F:quinone binding"/>
    <property type="evidence" value="ECO:0007669"/>
    <property type="project" value="UniProtKB-KW"/>
</dbReference>
<dbReference type="GO" id="GO:0009060">
    <property type="term" value="P:aerobic respiration"/>
    <property type="evidence" value="ECO:0000318"/>
    <property type="project" value="GO_Central"/>
</dbReference>
<dbReference type="HAMAP" id="MF_01350">
    <property type="entry name" value="NDH1_NuoH"/>
    <property type="match status" value="1"/>
</dbReference>
<dbReference type="InterPro" id="IPR001694">
    <property type="entry name" value="NADH_UbQ_OxRdtase_su1/FPO"/>
</dbReference>
<dbReference type="InterPro" id="IPR018086">
    <property type="entry name" value="NADH_UbQ_OxRdtase_su1_CS"/>
</dbReference>
<dbReference type="NCBIfam" id="NF004741">
    <property type="entry name" value="PRK06076.1-2"/>
    <property type="match status" value="1"/>
</dbReference>
<dbReference type="PANTHER" id="PTHR11432">
    <property type="entry name" value="NADH DEHYDROGENASE SUBUNIT 1"/>
    <property type="match status" value="1"/>
</dbReference>
<dbReference type="PANTHER" id="PTHR11432:SF3">
    <property type="entry name" value="NADH-UBIQUINONE OXIDOREDUCTASE CHAIN 1"/>
    <property type="match status" value="1"/>
</dbReference>
<dbReference type="Pfam" id="PF00146">
    <property type="entry name" value="NADHdh"/>
    <property type="match status" value="1"/>
</dbReference>
<dbReference type="PROSITE" id="PS00668">
    <property type="entry name" value="COMPLEX1_ND1_2"/>
    <property type="match status" value="1"/>
</dbReference>
<sequence length="358" mass="40161">MFDFSIVTNWIHEMLLSVMPEGWAIFIECIAVGVCIVALYAILAIVLIYMERKVCGFFQCRLGPNRVGKWGSIQVICDVLKMLTKEIFTPKDADRFLYNLAPFMVIIASFLTFACIPFNKGAEILNFNVGVFFLLAASSIGVVGILLAGWGSNNKFSLIGAMRSGAQIISYELSVGMSIMTMVVLMGTMQFSEIVEGQADGWFIFKGHIPAVIAFIIYLIAGNAECNRGPFDLPEAESELTAGYHTEYSGMHFGFFYLAEYLNLFIVASVAATIFLGGWMPLHIIGLDGFNAVMDYIPGFIWFFAKAFFVVFLLMWIKWTFPRLRIDQILNLEWKYLVPISMVNLLLMACCVAFGFHF</sequence>
<keyword id="KW-0997">Cell inner membrane</keyword>
<keyword id="KW-1003">Cell membrane</keyword>
<keyword id="KW-0472">Membrane</keyword>
<keyword id="KW-0520">NAD</keyword>
<keyword id="KW-0874">Quinone</keyword>
<keyword id="KW-1185">Reference proteome</keyword>
<keyword id="KW-1278">Translocase</keyword>
<keyword id="KW-0812">Transmembrane</keyword>
<keyword id="KW-1133">Transmembrane helix</keyword>
<keyword id="KW-0830">Ubiquinone</keyword>
<evidence type="ECO:0000255" key="1">
    <source>
        <dbReference type="HAMAP-Rule" id="MF_01350"/>
    </source>
</evidence>
<feature type="chain" id="PRO_0000244892" description="NADH-quinone oxidoreductase subunit H">
    <location>
        <begin position="1"/>
        <end position="358"/>
    </location>
</feature>
<feature type="transmembrane region" description="Helical" evidence="1">
    <location>
        <begin position="30"/>
        <end position="50"/>
    </location>
</feature>
<feature type="transmembrane region" description="Helical" evidence="1">
    <location>
        <begin position="96"/>
        <end position="116"/>
    </location>
</feature>
<feature type="transmembrane region" description="Helical" evidence="1">
    <location>
        <begin position="129"/>
        <end position="149"/>
    </location>
</feature>
<feature type="transmembrane region" description="Helical" evidence="1">
    <location>
        <begin position="168"/>
        <end position="188"/>
    </location>
</feature>
<feature type="transmembrane region" description="Helical" evidence="1">
    <location>
        <begin position="201"/>
        <end position="221"/>
    </location>
</feature>
<feature type="transmembrane region" description="Helical" evidence="1">
    <location>
        <begin position="265"/>
        <end position="285"/>
    </location>
</feature>
<feature type="transmembrane region" description="Helical" evidence="1">
    <location>
        <begin position="297"/>
        <end position="317"/>
    </location>
</feature>
<feature type="transmembrane region" description="Helical" evidence="1">
    <location>
        <begin position="336"/>
        <end position="356"/>
    </location>
</feature>
<protein>
    <recommendedName>
        <fullName evidence="1">NADH-quinone oxidoreductase subunit H</fullName>
        <ecNumber evidence="1">7.1.1.-</ecNumber>
    </recommendedName>
    <alternativeName>
        <fullName evidence="1">NADH dehydrogenase I subunit H</fullName>
    </alternativeName>
    <alternativeName>
        <fullName evidence="1">NDH-1 subunit H</fullName>
    </alternativeName>
</protein>
<name>NUOH_BACTN</name>
<reference key="1">
    <citation type="journal article" date="2003" name="Science">
        <title>A genomic view of the human-Bacteroides thetaiotaomicron symbiosis.</title>
        <authorList>
            <person name="Xu J."/>
            <person name="Bjursell M.K."/>
            <person name="Himrod J."/>
            <person name="Deng S."/>
            <person name="Carmichael L.K."/>
            <person name="Chiang H.C."/>
            <person name="Hooper L.V."/>
            <person name="Gordon J.I."/>
        </authorList>
    </citation>
    <scope>NUCLEOTIDE SEQUENCE [LARGE SCALE GENOMIC DNA]</scope>
    <source>
        <strain>ATCC 29148 / DSM 2079 / JCM 5827 / CCUG 10774 / NCTC 10582 / VPI-5482 / E50</strain>
    </source>
</reference>
<accession>Q8A0F7</accession>
<proteinExistence type="inferred from homology"/>